<keyword id="KW-1015">Disulfide bond</keyword>
<keyword id="KW-0245">EGF-like domain</keyword>
<keyword id="KW-0325">Glycoprotein</keyword>
<keyword id="KW-0339">Growth factor</keyword>
<keyword id="KW-0472">Membrane</keyword>
<keyword id="KW-1185">Reference proteome</keyword>
<keyword id="KW-0732">Signal</keyword>
<keyword id="KW-0812">Transmembrane</keyword>
<keyword id="KW-1133">Transmembrane helix</keyword>
<comment type="function">
    <text evidence="1">Promotes the growth of epithelial cells.</text>
</comment>
<comment type="subcellular location">
    <subcellularLocation>
        <location evidence="4">Membrane</location>
        <topology evidence="4">Single-pass type I membrane protein</topology>
    </subcellularLocation>
</comment>
<gene>
    <name type="primary">EPGN</name>
</gene>
<organism>
    <name type="scientific">Gallus gallus</name>
    <name type="common">Chicken</name>
    <dbReference type="NCBI Taxonomy" id="9031"/>
    <lineage>
        <taxon>Eukaryota</taxon>
        <taxon>Metazoa</taxon>
        <taxon>Chordata</taxon>
        <taxon>Craniata</taxon>
        <taxon>Vertebrata</taxon>
        <taxon>Euteleostomi</taxon>
        <taxon>Archelosauria</taxon>
        <taxon>Archosauria</taxon>
        <taxon>Dinosauria</taxon>
        <taxon>Saurischia</taxon>
        <taxon>Theropoda</taxon>
        <taxon>Coelurosauria</taxon>
        <taxon>Aves</taxon>
        <taxon>Neognathae</taxon>
        <taxon>Galloanserae</taxon>
        <taxon>Galliformes</taxon>
        <taxon>Phasianidae</taxon>
        <taxon>Phasianinae</taxon>
        <taxon>Gallus</taxon>
    </lineage>
</organism>
<name>EPGN_CHICK</name>
<evidence type="ECO:0000250" key="1"/>
<evidence type="ECO:0000255" key="2"/>
<evidence type="ECO:0000255" key="3">
    <source>
        <dbReference type="PROSITE-ProRule" id="PRU00076"/>
    </source>
</evidence>
<evidence type="ECO:0000305" key="4"/>
<proteinExistence type="evidence at transcript level"/>
<accession>Q5EG71</accession>
<feature type="signal peptide" evidence="2">
    <location>
        <begin position="1"/>
        <end position="18"/>
    </location>
</feature>
<feature type="chain" id="PRO_0000045464" description="Epigen">
    <location>
        <begin position="19"/>
        <end position="151"/>
    </location>
</feature>
<feature type="topological domain" description="Extracellular" evidence="2">
    <location>
        <begin position="19"/>
        <end position="108"/>
    </location>
</feature>
<feature type="transmembrane region" description="Helical" evidence="2">
    <location>
        <begin position="109"/>
        <end position="129"/>
    </location>
</feature>
<feature type="topological domain" description="Cytoplasmic" evidence="2">
    <location>
        <begin position="130"/>
        <end position="151"/>
    </location>
</feature>
<feature type="domain" description="EGF-like" evidence="3">
    <location>
        <begin position="54"/>
        <end position="94"/>
    </location>
</feature>
<feature type="glycosylation site" description="N-linked (GlcNAc...) asparagine" evidence="2">
    <location>
        <position position="39"/>
    </location>
</feature>
<feature type="disulfide bond" evidence="3">
    <location>
        <begin position="58"/>
        <end position="71"/>
    </location>
</feature>
<feature type="disulfide bond" evidence="3">
    <location>
        <begin position="66"/>
        <end position="82"/>
    </location>
</feature>
<feature type="disulfide bond" evidence="3">
    <location>
        <begin position="84"/>
        <end position="93"/>
    </location>
</feature>
<protein>
    <recommendedName>
        <fullName>Epigen</fullName>
    </recommendedName>
    <alternativeName>
        <fullName>Epithelial mitogen</fullName>
        <shortName>EPG</shortName>
    </alternativeName>
</protein>
<dbReference type="EMBL" id="AY885230">
    <property type="protein sequence ID" value="AAW79578.1"/>
    <property type="molecule type" value="mRNA"/>
</dbReference>
<dbReference type="RefSeq" id="NP_001012404.1">
    <property type="nucleotide sequence ID" value="NM_001012404.2"/>
</dbReference>
<dbReference type="SMR" id="Q5EG71"/>
<dbReference type="STRING" id="9031.ENSGALP00000017636"/>
<dbReference type="GlyCosmos" id="Q5EG71">
    <property type="glycosylation" value="1 site, No reported glycans"/>
</dbReference>
<dbReference type="GlyGen" id="Q5EG71">
    <property type="glycosylation" value="1 site"/>
</dbReference>
<dbReference type="PaxDb" id="9031-ENSGALP00000017636"/>
<dbReference type="Ensembl" id="ENSGALT00010007759.1">
    <property type="protein sequence ID" value="ENSGALP00010004660.1"/>
    <property type="gene ID" value="ENSGALG00010003315.1"/>
</dbReference>
<dbReference type="GeneID" id="497270"/>
<dbReference type="KEGG" id="gga:497270"/>
<dbReference type="CTD" id="255324"/>
<dbReference type="VEuPathDB" id="HostDB:geneid_497270"/>
<dbReference type="eggNOG" id="ENOG502S4QW">
    <property type="taxonomic scope" value="Eukaryota"/>
</dbReference>
<dbReference type="GeneTree" id="ENSGT00510000048556"/>
<dbReference type="HOGENOM" id="CLU_144237_0_0_1"/>
<dbReference type="InParanoid" id="Q5EG71"/>
<dbReference type="OrthoDB" id="9411915at2759"/>
<dbReference type="PhylomeDB" id="Q5EG71"/>
<dbReference type="TreeFam" id="TF335931"/>
<dbReference type="Reactome" id="R-GGA-1257604">
    <property type="pathway name" value="PIP3 activates AKT signaling"/>
</dbReference>
<dbReference type="Reactome" id="R-GGA-177929">
    <property type="pathway name" value="Signaling by EGFR"/>
</dbReference>
<dbReference type="Reactome" id="R-GGA-179812">
    <property type="pathway name" value="GRB2 events in EGFR signaling"/>
</dbReference>
<dbReference type="Reactome" id="R-GGA-180292">
    <property type="pathway name" value="GAB1 signalosome"/>
</dbReference>
<dbReference type="Reactome" id="R-GGA-180336">
    <property type="pathway name" value="SHC1 events in EGFR signaling"/>
</dbReference>
<dbReference type="Reactome" id="R-GGA-182971">
    <property type="pathway name" value="EGFR downregulation"/>
</dbReference>
<dbReference type="Reactome" id="R-GGA-212718">
    <property type="pathway name" value="EGFR interacts with phospholipase C-gamma"/>
</dbReference>
<dbReference type="Reactome" id="R-GGA-5673001">
    <property type="pathway name" value="RAF/MAP kinase cascade"/>
</dbReference>
<dbReference type="Reactome" id="R-GGA-6811558">
    <property type="pathway name" value="PI5P, PP2A and IER3 Regulate PI3K/AKT Signaling"/>
</dbReference>
<dbReference type="Reactome" id="R-GGA-8856825">
    <property type="pathway name" value="Cargo recognition for clathrin-mediated endocytosis"/>
</dbReference>
<dbReference type="Reactome" id="R-GGA-8856828">
    <property type="pathway name" value="Clathrin-mediated endocytosis"/>
</dbReference>
<dbReference type="Reactome" id="R-GGA-9009391">
    <property type="pathway name" value="Extra-nuclear estrogen signaling"/>
</dbReference>
<dbReference type="PRO" id="PR:Q5EG71"/>
<dbReference type="Proteomes" id="UP000000539">
    <property type="component" value="Chromosome 4"/>
</dbReference>
<dbReference type="Bgee" id="ENSGALG00000010859">
    <property type="expression patterns" value="Expressed in granulocyte and 5 other cell types or tissues"/>
</dbReference>
<dbReference type="GO" id="GO:0005615">
    <property type="term" value="C:extracellular space"/>
    <property type="evidence" value="ECO:0000318"/>
    <property type="project" value="GO_Central"/>
</dbReference>
<dbReference type="GO" id="GO:0005886">
    <property type="term" value="C:plasma membrane"/>
    <property type="evidence" value="ECO:0000250"/>
    <property type="project" value="HGNC-UCL"/>
</dbReference>
<dbReference type="GO" id="GO:0005154">
    <property type="term" value="F:epidermal growth factor receptor binding"/>
    <property type="evidence" value="ECO:0000318"/>
    <property type="project" value="GO_Central"/>
</dbReference>
<dbReference type="GO" id="GO:0008083">
    <property type="term" value="F:growth factor activity"/>
    <property type="evidence" value="ECO:0000250"/>
    <property type="project" value="HGNC-UCL"/>
</dbReference>
<dbReference type="GO" id="GO:0030297">
    <property type="term" value="F:transmembrane receptor protein tyrosine kinase activator activity"/>
    <property type="evidence" value="ECO:0007669"/>
    <property type="project" value="Ensembl"/>
</dbReference>
<dbReference type="GO" id="GO:0001525">
    <property type="term" value="P:angiogenesis"/>
    <property type="evidence" value="ECO:0000250"/>
    <property type="project" value="HGNC-UCL"/>
</dbReference>
<dbReference type="GO" id="GO:0007173">
    <property type="term" value="P:epidermal growth factor receptor signaling pathway"/>
    <property type="evidence" value="ECO:0000250"/>
    <property type="project" value="HGNC-UCL"/>
</dbReference>
<dbReference type="GO" id="GO:0000165">
    <property type="term" value="P:MAPK cascade"/>
    <property type="evidence" value="ECO:0007669"/>
    <property type="project" value="Ensembl"/>
</dbReference>
<dbReference type="GO" id="GO:0008284">
    <property type="term" value="P:positive regulation of cell population proliferation"/>
    <property type="evidence" value="ECO:0000250"/>
    <property type="project" value="HGNC-UCL"/>
</dbReference>
<dbReference type="GO" id="GO:0050679">
    <property type="term" value="P:positive regulation of epithelial cell proliferation"/>
    <property type="evidence" value="ECO:0000250"/>
    <property type="project" value="HGNC-UCL"/>
</dbReference>
<dbReference type="GO" id="GO:0043410">
    <property type="term" value="P:positive regulation of MAPK cascade"/>
    <property type="evidence" value="ECO:0000250"/>
    <property type="project" value="HGNC-UCL"/>
</dbReference>
<dbReference type="GO" id="GO:0045840">
    <property type="term" value="P:positive regulation of mitotic nuclear division"/>
    <property type="evidence" value="ECO:0000250"/>
    <property type="project" value="HGNC-UCL"/>
</dbReference>
<dbReference type="FunFam" id="2.10.25.10:FF:000641">
    <property type="entry name" value="epigen isoform X4"/>
    <property type="match status" value="1"/>
</dbReference>
<dbReference type="Gene3D" id="2.10.25.10">
    <property type="entry name" value="Laminin"/>
    <property type="match status" value="1"/>
</dbReference>
<dbReference type="InterPro" id="IPR000742">
    <property type="entry name" value="EGF-like_dom"/>
</dbReference>
<dbReference type="PANTHER" id="PTHR10740:SF10">
    <property type="entry name" value="EPIGEN"/>
    <property type="match status" value="1"/>
</dbReference>
<dbReference type="PANTHER" id="PTHR10740">
    <property type="entry name" value="TRANSFORMING GROWTH FACTOR ALPHA"/>
    <property type="match status" value="1"/>
</dbReference>
<dbReference type="SUPFAM" id="SSF57196">
    <property type="entry name" value="EGF/Laminin"/>
    <property type="match status" value="1"/>
</dbReference>
<dbReference type="PROSITE" id="PS00022">
    <property type="entry name" value="EGF_1"/>
    <property type="match status" value="1"/>
</dbReference>
<dbReference type="PROSITE" id="PS01186">
    <property type="entry name" value="EGF_2"/>
    <property type="match status" value="1"/>
</dbReference>
<dbReference type="PROSITE" id="PS50026">
    <property type="entry name" value="EGF_3"/>
    <property type="match status" value="1"/>
</dbReference>
<sequence length="151" mass="17030">MAFGMLIYILLKAMGALSEEAALTASSLSTELWNSWTKNNTEAYYAEQPRLLKLMQTCLEEHHSYCINGLCAFHSELRKPICKCLAGYNGERCEHLTLNSYAHNSYERYIAVGIGIGILTSGILAIIYCYVRKRCRKLKSPYKVCMGETAL</sequence>
<reference key="1">
    <citation type="submission" date="2005-01" db="EMBL/GenBank/DDBJ databases">
        <title>Cloning of chicken ovarian epigen and regulation of its mRNA expression in the cultured ovarian granulosa cells.</title>
        <authorList>
            <person name="Wang Y."/>
            <person name="Li J."/>
            <person name="Leung F.C."/>
        </authorList>
    </citation>
    <scope>NUCLEOTIDE SEQUENCE [MRNA]</scope>
    <source>
        <tissue>Ovary</tissue>
    </source>
</reference>